<gene>
    <name evidence="1" type="primary">rpoZ</name>
    <name type="ordered locus">BURPS1106A_3014</name>
</gene>
<sequence length="67" mass="7400">MARITVEDCLKQIPNRFELALAATYRARQLAQGHTPKIESRDKPTVVALREIAAGQVGVEMLKKVPA</sequence>
<protein>
    <recommendedName>
        <fullName evidence="1">DNA-directed RNA polymerase subunit omega</fullName>
        <shortName evidence="1">RNAP omega subunit</shortName>
        <ecNumber evidence="1">2.7.7.6</ecNumber>
    </recommendedName>
    <alternativeName>
        <fullName evidence="1">RNA polymerase omega subunit</fullName>
    </alternativeName>
    <alternativeName>
        <fullName evidence="1">Transcriptase subunit omega</fullName>
    </alternativeName>
</protein>
<keyword id="KW-0240">DNA-directed RNA polymerase</keyword>
<keyword id="KW-0548">Nucleotidyltransferase</keyword>
<keyword id="KW-0804">Transcription</keyword>
<keyword id="KW-0808">Transferase</keyword>
<dbReference type="EC" id="2.7.7.6" evidence="1"/>
<dbReference type="EMBL" id="CP000572">
    <property type="protein sequence ID" value="ABN88809.1"/>
    <property type="molecule type" value="Genomic_DNA"/>
</dbReference>
<dbReference type="RefSeq" id="WP_004185855.1">
    <property type="nucleotide sequence ID" value="NC_009076.1"/>
</dbReference>
<dbReference type="SMR" id="A3NY34"/>
<dbReference type="GeneID" id="93061155"/>
<dbReference type="KEGG" id="bpl:BURPS1106A_3014"/>
<dbReference type="HOGENOM" id="CLU_125406_5_2_4"/>
<dbReference type="Proteomes" id="UP000006738">
    <property type="component" value="Chromosome I"/>
</dbReference>
<dbReference type="GO" id="GO:0000428">
    <property type="term" value="C:DNA-directed RNA polymerase complex"/>
    <property type="evidence" value="ECO:0007669"/>
    <property type="project" value="UniProtKB-KW"/>
</dbReference>
<dbReference type="GO" id="GO:0003677">
    <property type="term" value="F:DNA binding"/>
    <property type="evidence" value="ECO:0007669"/>
    <property type="project" value="UniProtKB-UniRule"/>
</dbReference>
<dbReference type="GO" id="GO:0003899">
    <property type="term" value="F:DNA-directed RNA polymerase activity"/>
    <property type="evidence" value="ECO:0007669"/>
    <property type="project" value="UniProtKB-UniRule"/>
</dbReference>
<dbReference type="GO" id="GO:0006351">
    <property type="term" value="P:DNA-templated transcription"/>
    <property type="evidence" value="ECO:0007669"/>
    <property type="project" value="UniProtKB-UniRule"/>
</dbReference>
<dbReference type="Gene3D" id="3.90.940.10">
    <property type="match status" value="1"/>
</dbReference>
<dbReference type="HAMAP" id="MF_00366">
    <property type="entry name" value="RNApol_bact_RpoZ"/>
    <property type="match status" value="1"/>
</dbReference>
<dbReference type="InterPro" id="IPR003716">
    <property type="entry name" value="DNA-dir_RNA_pol_omega"/>
</dbReference>
<dbReference type="InterPro" id="IPR006110">
    <property type="entry name" value="Pol_omega/Rpo6/RPB6"/>
</dbReference>
<dbReference type="InterPro" id="IPR036161">
    <property type="entry name" value="RPB6/omega-like_sf"/>
</dbReference>
<dbReference type="NCBIfam" id="TIGR00690">
    <property type="entry name" value="rpoZ"/>
    <property type="match status" value="1"/>
</dbReference>
<dbReference type="PANTHER" id="PTHR34476">
    <property type="entry name" value="DNA-DIRECTED RNA POLYMERASE SUBUNIT OMEGA"/>
    <property type="match status" value="1"/>
</dbReference>
<dbReference type="PANTHER" id="PTHR34476:SF1">
    <property type="entry name" value="DNA-DIRECTED RNA POLYMERASE SUBUNIT OMEGA"/>
    <property type="match status" value="1"/>
</dbReference>
<dbReference type="Pfam" id="PF01192">
    <property type="entry name" value="RNA_pol_Rpb6"/>
    <property type="match status" value="1"/>
</dbReference>
<dbReference type="SMART" id="SM01409">
    <property type="entry name" value="RNA_pol_Rpb6"/>
    <property type="match status" value="1"/>
</dbReference>
<dbReference type="SUPFAM" id="SSF63562">
    <property type="entry name" value="RPB6/omega subunit-like"/>
    <property type="match status" value="1"/>
</dbReference>
<proteinExistence type="inferred from homology"/>
<accession>A3NY34</accession>
<name>RPOZ_BURP0</name>
<organism>
    <name type="scientific">Burkholderia pseudomallei (strain 1106a)</name>
    <dbReference type="NCBI Taxonomy" id="357348"/>
    <lineage>
        <taxon>Bacteria</taxon>
        <taxon>Pseudomonadati</taxon>
        <taxon>Pseudomonadota</taxon>
        <taxon>Betaproteobacteria</taxon>
        <taxon>Burkholderiales</taxon>
        <taxon>Burkholderiaceae</taxon>
        <taxon>Burkholderia</taxon>
        <taxon>pseudomallei group</taxon>
    </lineage>
</organism>
<feature type="chain" id="PRO_1000005902" description="DNA-directed RNA polymerase subunit omega">
    <location>
        <begin position="1"/>
        <end position="67"/>
    </location>
</feature>
<evidence type="ECO:0000255" key="1">
    <source>
        <dbReference type="HAMAP-Rule" id="MF_00366"/>
    </source>
</evidence>
<comment type="function">
    <text evidence="1">Promotes RNA polymerase assembly. Latches the N- and C-terminal regions of the beta' subunit thereby facilitating its interaction with the beta and alpha subunits.</text>
</comment>
<comment type="catalytic activity">
    <reaction evidence="1">
        <text>RNA(n) + a ribonucleoside 5'-triphosphate = RNA(n+1) + diphosphate</text>
        <dbReference type="Rhea" id="RHEA:21248"/>
        <dbReference type="Rhea" id="RHEA-COMP:14527"/>
        <dbReference type="Rhea" id="RHEA-COMP:17342"/>
        <dbReference type="ChEBI" id="CHEBI:33019"/>
        <dbReference type="ChEBI" id="CHEBI:61557"/>
        <dbReference type="ChEBI" id="CHEBI:140395"/>
        <dbReference type="EC" id="2.7.7.6"/>
    </reaction>
</comment>
<comment type="subunit">
    <text evidence="1">The RNAP catalytic core consists of 2 alpha, 1 beta, 1 beta' and 1 omega subunit. When a sigma factor is associated with the core the holoenzyme is formed, which can initiate transcription.</text>
</comment>
<comment type="similarity">
    <text evidence="1">Belongs to the RNA polymerase subunit omega family.</text>
</comment>
<reference key="1">
    <citation type="journal article" date="2010" name="Genome Biol. Evol.">
        <title>Continuing evolution of Burkholderia mallei through genome reduction and large-scale rearrangements.</title>
        <authorList>
            <person name="Losada L."/>
            <person name="Ronning C.M."/>
            <person name="DeShazer D."/>
            <person name="Woods D."/>
            <person name="Fedorova N."/>
            <person name="Kim H.S."/>
            <person name="Shabalina S.A."/>
            <person name="Pearson T.R."/>
            <person name="Brinkac L."/>
            <person name="Tan P."/>
            <person name="Nandi T."/>
            <person name="Crabtree J."/>
            <person name="Badger J."/>
            <person name="Beckstrom-Sternberg S."/>
            <person name="Saqib M."/>
            <person name="Schutzer S.E."/>
            <person name="Keim P."/>
            <person name="Nierman W.C."/>
        </authorList>
    </citation>
    <scope>NUCLEOTIDE SEQUENCE [LARGE SCALE GENOMIC DNA]</scope>
    <source>
        <strain>1106a</strain>
    </source>
</reference>